<proteinExistence type="inferred from homology"/>
<accession>C1KWS7</accession>
<gene>
    <name evidence="1" type="primary">ilvD</name>
    <name type="ordered locus">Lm4b_01995</name>
</gene>
<comment type="function">
    <text evidence="1">Functions in the biosynthesis of branched-chain amino acids. Catalyzes the dehydration of (2R,3R)-2,3-dihydroxy-3-methylpentanoate (2,3-dihydroxy-3-methylvalerate) into 2-oxo-3-methylpentanoate (2-oxo-3-methylvalerate) and of (2R)-2,3-dihydroxy-3-methylbutanoate (2,3-dihydroxyisovalerate) into 2-oxo-3-methylbutanoate (2-oxoisovalerate), the penultimate precursor to L-isoleucine and L-valine, respectively.</text>
</comment>
<comment type="catalytic activity">
    <reaction evidence="1">
        <text>(2R)-2,3-dihydroxy-3-methylbutanoate = 3-methyl-2-oxobutanoate + H2O</text>
        <dbReference type="Rhea" id="RHEA:24809"/>
        <dbReference type="ChEBI" id="CHEBI:11851"/>
        <dbReference type="ChEBI" id="CHEBI:15377"/>
        <dbReference type="ChEBI" id="CHEBI:49072"/>
        <dbReference type="EC" id="4.2.1.9"/>
    </reaction>
    <physiologicalReaction direction="left-to-right" evidence="1">
        <dbReference type="Rhea" id="RHEA:24810"/>
    </physiologicalReaction>
</comment>
<comment type="catalytic activity">
    <reaction evidence="1">
        <text>(2R,3R)-2,3-dihydroxy-3-methylpentanoate = (S)-3-methyl-2-oxopentanoate + H2O</text>
        <dbReference type="Rhea" id="RHEA:27694"/>
        <dbReference type="ChEBI" id="CHEBI:15377"/>
        <dbReference type="ChEBI" id="CHEBI:35146"/>
        <dbReference type="ChEBI" id="CHEBI:49258"/>
        <dbReference type="EC" id="4.2.1.9"/>
    </reaction>
    <physiologicalReaction direction="left-to-right" evidence="1">
        <dbReference type="Rhea" id="RHEA:27695"/>
    </physiologicalReaction>
</comment>
<comment type="cofactor">
    <cofactor evidence="1">
        <name>[2Fe-2S] cluster</name>
        <dbReference type="ChEBI" id="CHEBI:190135"/>
    </cofactor>
    <text evidence="1">Binds 1 [2Fe-2S] cluster per subunit. This cluster acts as a Lewis acid cofactor.</text>
</comment>
<comment type="cofactor">
    <cofactor evidence="1">
        <name>Mg(2+)</name>
        <dbReference type="ChEBI" id="CHEBI:18420"/>
    </cofactor>
</comment>
<comment type="pathway">
    <text evidence="1">Amino-acid biosynthesis; L-isoleucine biosynthesis; L-isoleucine from 2-oxobutanoate: step 3/4.</text>
</comment>
<comment type="pathway">
    <text evidence="1">Amino-acid biosynthesis; L-valine biosynthesis; L-valine from pyruvate: step 3/4.</text>
</comment>
<comment type="subunit">
    <text evidence="1">Homodimer.</text>
</comment>
<comment type="similarity">
    <text evidence="1">Belongs to the IlvD/Edd family.</text>
</comment>
<protein>
    <recommendedName>
        <fullName evidence="1">Dihydroxy-acid dehydratase</fullName>
        <shortName evidence="1">DAD</shortName>
        <ecNumber evidence="1">4.2.1.9</ecNumber>
    </recommendedName>
</protein>
<feature type="chain" id="PRO_1000201780" description="Dihydroxy-acid dehydratase">
    <location>
        <begin position="1"/>
        <end position="564"/>
    </location>
</feature>
<feature type="active site" description="Proton acceptor" evidence="1">
    <location>
        <position position="473"/>
    </location>
</feature>
<feature type="binding site" evidence="1">
    <location>
        <position position="80"/>
    </location>
    <ligand>
        <name>Mg(2+)</name>
        <dbReference type="ChEBI" id="CHEBI:18420"/>
    </ligand>
</feature>
<feature type="binding site" evidence="1">
    <location>
        <position position="121"/>
    </location>
    <ligand>
        <name>[2Fe-2S] cluster</name>
        <dbReference type="ChEBI" id="CHEBI:190135"/>
    </ligand>
</feature>
<feature type="binding site" evidence="1">
    <location>
        <position position="122"/>
    </location>
    <ligand>
        <name>Mg(2+)</name>
        <dbReference type="ChEBI" id="CHEBI:18420"/>
    </ligand>
</feature>
<feature type="binding site" description="via carbamate group" evidence="1">
    <location>
        <position position="123"/>
    </location>
    <ligand>
        <name>Mg(2+)</name>
        <dbReference type="ChEBI" id="CHEBI:18420"/>
    </ligand>
</feature>
<feature type="binding site" evidence="1">
    <location>
        <position position="194"/>
    </location>
    <ligand>
        <name>[2Fe-2S] cluster</name>
        <dbReference type="ChEBI" id="CHEBI:190135"/>
    </ligand>
</feature>
<feature type="binding site" evidence="1">
    <location>
        <position position="447"/>
    </location>
    <ligand>
        <name>Mg(2+)</name>
        <dbReference type="ChEBI" id="CHEBI:18420"/>
    </ligand>
</feature>
<feature type="modified residue" description="N6-carboxylysine" evidence="1">
    <location>
        <position position="123"/>
    </location>
</feature>
<dbReference type="EC" id="4.2.1.9" evidence="1"/>
<dbReference type="EMBL" id="FM242711">
    <property type="protein sequence ID" value="CAS05752.1"/>
    <property type="molecule type" value="Genomic_DNA"/>
</dbReference>
<dbReference type="RefSeq" id="WP_003725873.1">
    <property type="nucleotide sequence ID" value="NC_012488.1"/>
</dbReference>
<dbReference type="SMR" id="C1KWS7"/>
<dbReference type="KEGG" id="lmc:Lm4b_01995"/>
<dbReference type="HOGENOM" id="CLU_014271_4_2_9"/>
<dbReference type="UniPathway" id="UPA00047">
    <property type="reaction ID" value="UER00057"/>
</dbReference>
<dbReference type="UniPathway" id="UPA00049">
    <property type="reaction ID" value="UER00061"/>
</dbReference>
<dbReference type="GO" id="GO:0005829">
    <property type="term" value="C:cytosol"/>
    <property type="evidence" value="ECO:0007669"/>
    <property type="project" value="TreeGrafter"/>
</dbReference>
<dbReference type="GO" id="GO:0051537">
    <property type="term" value="F:2 iron, 2 sulfur cluster binding"/>
    <property type="evidence" value="ECO:0007669"/>
    <property type="project" value="UniProtKB-UniRule"/>
</dbReference>
<dbReference type="GO" id="GO:0004160">
    <property type="term" value="F:dihydroxy-acid dehydratase activity"/>
    <property type="evidence" value="ECO:0007669"/>
    <property type="project" value="UniProtKB-UniRule"/>
</dbReference>
<dbReference type="GO" id="GO:0000287">
    <property type="term" value="F:magnesium ion binding"/>
    <property type="evidence" value="ECO:0007669"/>
    <property type="project" value="UniProtKB-UniRule"/>
</dbReference>
<dbReference type="GO" id="GO:0009097">
    <property type="term" value="P:isoleucine biosynthetic process"/>
    <property type="evidence" value="ECO:0007669"/>
    <property type="project" value="UniProtKB-UniRule"/>
</dbReference>
<dbReference type="GO" id="GO:0009099">
    <property type="term" value="P:L-valine biosynthetic process"/>
    <property type="evidence" value="ECO:0007669"/>
    <property type="project" value="UniProtKB-UniRule"/>
</dbReference>
<dbReference type="FunFam" id="3.50.30.80:FF:000001">
    <property type="entry name" value="Dihydroxy-acid dehydratase"/>
    <property type="match status" value="1"/>
</dbReference>
<dbReference type="Gene3D" id="3.50.30.80">
    <property type="entry name" value="IlvD/EDD C-terminal domain-like"/>
    <property type="match status" value="1"/>
</dbReference>
<dbReference type="HAMAP" id="MF_00012">
    <property type="entry name" value="IlvD"/>
    <property type="match status" value="1"/>
</dbReference>
<dbReference type="InterPro" id="IPR042096">
    <property type="entry name" value="Dihydro-acid_dehy_C"/>
</dbReference>
<dbReference type="InterPro" id="IPR004404">
    <property type="entry name" value="DihydroxyA_deHydtase"/>
</dbReference>
<dbReference type="InterPro" id="IPR020558">
    <property type="entry name" value="DiOHA_6PGluconate_deHydtase_CS"/>
</dbReference>
<dbReference type="InterPro" id="IPR056740">
    <property type="entry name" value="ILV_EDD_C"/>
</dbReference>
<dbReference type="InterPro" id="IPR000581">
    <property type="entry name" value="ILV_EDD_N"/>
</dbReference>
<dbReference type="InterPro" id="IPR037237">
    <property type="entry name" value="IlvD/EDD_N"/>
</dbReference>
<dbReference type="NCBIfam" id="TIGR00110">
    <property type="entry name" value="ilvD"/>
    <property type="match status" value="1"/>
</dbReference>
<dbReference type="NCBIfam" id="NF002068">
    <property type="entry name" value="PRK00911.1"/>
    <property type="match status" value="1"/>
</dbReference>
<dbReference type="PANTHER" id="PTHR43661">
    <property type="entry name" value="D-XYLONATE DEHYDRATASE"/>
    <property type="match status" value="1"/>
</dbReference>
<dbReference type="PANTHER" id="PTHR43661:SF3">
    <property type="entry name" value="D-XYLONATE DEHYDRATASE YAGF-RELATED"/>
    <property type="match status" value="1"/>
</dbReference>
<dbReference type="Pfam" id="PF24877">
    <property type="entry name" value="ILV_EDD_C"/>
    <property type="match status" value="1"/>
</dbReference>
<dbReference type="Pfam" id="PF00920">
    <property type="entry name" value="ILVD_EDD_N"/>
    <property type="match status" value="1"/>
</dbReference>
<dbReference type="SUPFAM" id="SSF143975">
    <property type="entry name" value="IlvD/EDD N-terminal domain-like"/>
    <property type="match status" value="1"/>
</dbReference>
<dbReference type="SUPFAM" id="SSF52016">
    <property type="entry name" value="LeuD/IlvD-like"/>
    <property type="match status" value="1"/>
</dbReference>
<dbReference type="PROSITE" id="PS00886">
    <property type="entry name" value="ILVD_EDD_1"/>
    <property type="match status" value="1"/>
</dbReference>
<dbReference type="PROSITE" id="PS00887">
    <property type="entry name" value="ILVD_EDD_2"/>
    <property type="match status" value="1"/>
</dbReference>
<organism>
    <name type="scientific">Listeria monocytogenes serotype 4b (strain CLIP80459)</name>
    <dbReference type="NCBI Taxonomy" id="568819"/>
    <lineage>
        <taxon>Bacteria</taxon>
        <taxon>Bacillati</taxon>
        <taxon>Bacillota</taxon>
        <taxon>Bacilli</taxon>
        <taxon>Bacillales</taxon>
        <taxon>Listeriaceae</taxon>
        <taxon>Listeria</taxon>
    </lineage>
</organism>
<keyword id="KW-0001">2Fe-2S</keyword>
<keyword id="KW-0028">Amino-acid biosynthesis</keyword>
<keyword id="KW-0100">Branched-chain amino acid biosynthesis</keyword>
<keyword id="KW-0408">Iron</keyword>
<keyword id="KW-0411">Iron-sulfur</keyword>
<keyword id="KW-0456">Lyase</keyword>
<keyword id="KW-0460">Magnesium</keyword>
<keyword id="KW-0479">Metal-binding</keyword>
<name>ILVD_LISMC</name>
<evidence type="ECO:0000255" key="1">
    <source>
        <dbReference type="HAMAP-Rule" id="MF_00012"/>
    </source>
</evidence>
<sequence length="564" mass="59864">MRSDKIKKGVEQAPARSLLHATGQIKSPGDMDKPFIAICNSYIDIVPGHVHLRELADVAKEAIREAGGIPFEFNTIGVDDGIAMGHIGMRYSLPSREVIADAAETVINAHWFDGVFYIPNCDKITPGMLLASVRTNVPAIFCSGGPMKAGLSAHGKALTLSSVFEAVGAFKDGSMSQEDFLDMEANACPTCGSCAGMFTANSMNCLMEILGMAVPGNGTTLAVSDARRDLIRESAFHLMDLVKKDIRPRDIITKDAIDDAFALDMAMGGSTNTVLHTLALANEAGIEDYDLERINDIAKRVPYLSKIAPSSSYSMHDVHEAGGVSAIVKELVDLGGAIHPDRITVTGKTIRENVADAKINNTDVIHPKENPYSPVGGLSMLFGNIAPKGAAIKVGGVDPSVQVFKGEAICFSSHDEAVEAIDNHTVREGHVVVIRYEGPKGGPGMPEMLAPTSSIVGRGLGKDVALITDGRFSGATRGIAVGHISPEAAAGGPIALVHDGDIITIDLPNRTLNVDVSDEVLEERRKELPKFKAKVKTGYLARYTALVTSAHTGGILQIPEDLID</sequence>
<reference key="1">
    <citation type="journal article" date="2012" name="BMC Genomics">
        <title>Comparative genomics and transcriptomics of lineages I, II, and III strains of Listeria monocytogenes.</title>
        <authorList>
            <person name="Hain T."/>
            <person name="Ghai R."/>
            <person name="Billion A."/>
            <person name="Kuenne C.T."/>
            <person name="Steinweg C."/>
            <person name="Izar B."/>
            <person name="Mohamed W."/>
            <person name="Mraheil M."/>
            <person name="Domann E."/>
            <person name="Schaffrath S."/>
            <person name="Karst U."/>
            <person name="Goesmann A."/>
            <person name="Oehm S."/>
            <person name="Puhler A."/>
            <person name="Merkl R."/>
            <person name="Vorwerk S."/>
            <person name="Glaser P."/>
            <person name="Garrido P."/>
            <person name="Rusniok C."/>
            <person name="Buchrieser C."/>
            <person name="Goebel W."/>
            <person name="Chakraborty T."/>
        </authorList>
    </citation>
    <scope>NUCLEOTIDE SEQUENCE [LARGE SCALE GENOMIC DNA]</scope>
    <source>
        <strain>CLIP80459</strain>
    </source>
</reference>